<feature type="chain" id="PRO_0000345862" description="tRNA modification GTPase MnmE">
    <location>
        <begin position="1"/>
        <end position="438"/>
    </location>
</feature>
<feature type="domain" description="TrmE-type G">
    <location>
        <begin position="215"/>
        <end position="360"/>
    </location>
</feature>
<feature type="binding site" evidence="1">
    <location>
        <position position="20"/>
    </location>
    <ligand>
        <name>(6S)-5-formyl-5,6,7,8-tetrahydrofolate</name>
        <dbReference type="ChEBI" id="CHEBI:57457"/>
    </ligand>
</feature>
<feature type="binding site" evidence="1">
    <location>
        <position position="79"/>
    </location>
    <ligand>
        <name>(6S)-5-formyl-5,6,7,8-tetrahydrofolate</name>
        <dbReference type="ChEBI" id="CHEBI:57457"/>
    </ligand>
</feature>
<feature type="binding site" evidence="1">
    <location>
        <position position="119"/>
    </location>
    <ligand>
        <name>(6S)-5-formyl-5,6,7,8-tetrahydrofolate</name>
        <dbReference type="ChEBI" id="CHEBI:57457"/>
    </ligand>
</feature>
<feature type="binding site" evidence="1">
    <location>
        <begin position="225"/>
        <end position="230"/>
    </location>
    <ligand>
        <name>GTP</name>
        <dbReference type="ChEBI" id="CHEBI:37565"/>
    </ligand>
</feature>
<feature type="binding site" evidence="1">
    <location>
        <position position="229"/>
    </location>
    <ligand>
        <name>Mg(2+)</name>
        <dbReference type="ChEBI" id="CHEBI:18420"/>
    </ligand>
</feature>
<feature type="binding site" evidence="1">
    <location>
        <begin position="244"/>
        <end position="250"/>
    </location>
    <ligand>
        <name>GTP</name>
        <dbReference type="ChEBI" id="CHEBI:37565"/>
    </ligand>
</feature>
<feature type="binding site" evidence="1">
    <location>
        <position position="250"/>
    </location>
    <ligand>
        <name>Mg(2+)</name>
        <dbReference type="ChEBI" id="CHEBI:18420"/>
    </ligand>
</feature>
<feature type="binding site" evidence="1">
    <location>
        <begin position="269"/>
        <end position="272"/>
    </location>
    <ligand>
        <name>GTP</name>
        <dbReference type="ChEBI" id="CHEBI:37565"/>
    </ligand>
</feature>
<feature type="binding site" evidence="1">
    <location>
        <position position="438"/>
    </location>
    <ligand>
        <name>(6S)-5-formyl-5,6,7,8-tetrahydrofolate</name>
        <dbReference type="ChEBI" id="CHEBI:57457"/>
    </ligand>
</feature>
<comment type="function">
    <text evidence="1">Exhibits a very high intrinsic GTPase hydrolysis rate. Involved in the addition of a carboxymethylaminomethyl (cmnm) group at the wobble position (U34) of certain tRNAs, forming tRNA-cmnm(5)s(2)U34.</text>
</comment>
<comment type="cofactor">
    <cofactor evidence="1">
        <name>K(+)</name>
        <dbReference type="ChEBI" id="CHEBI:29103"/>
    </cofactor>
    <text evidence="1">Binds 1 potassium ion per subunit.</text>
</comment>
<comment type="subunit">
    <text evidence="1">Homodimer. Heterotetramer of two MnmE and two MnmG subunits.</text>
</comment>
<comment type="subcellular location">
    <subcellularLocation>
        <location evidence="1">Cytoplasm</location>
    </subcellularLocation>
</comment>
<comment type="similarity">
    <text evidence="1">Belongs to the TRAFAC class TrmE-Era-EngA-EngB-Septin-like GTPase superfamily. TrmE GTPase family.</text>
</comment>
<dbReference type="EC" id="3.6.-.-" evidence="1"/>
<dbReference type="EMBL" id="CP000774">
    <property type="protein sequence ID" value="ABS62892.1"/>
    <property type="molecule type" value="Genomic_DNA"/>
</dbReference>
<dbReference type="RefSeq" id="WP_012110163.1">
    <property type="nucleotide sequence ID" value="NC_009719.1"/>
</dbReference>
<dbReference type="SMR" id="A7HSK9"/>
<dbReference type="STRING" id="402881.Plav_1272"/>
<dbReference type="KEGG" id="pla:Plav_1272"/>
<dbReference type="eggNOG" id="COG0486">
    <property type="taxonomic scope" value="Bacteria"/>
</dbReference>
<dbReference type="HOGENOM" id="CLU_019624_3_1_5"/>
<dbReference type="OrthoDB" id="9805918at2"/>
<dbReference type="Proteomes" id="UP000006377">
    <property type="component" value="Chromosome"/>
</dbReference>
<dbReference type="GO" id="GO:0005737">
    <property type="term" value="C:cytoplasm"/>
    <property type="evidence" value="ECO:0007669"/>
    <property type="project" value="UniProtKB-SubCell"/>
</dbReference>
<dbReference type="GO" id="GO:0005525">
    <property type="term" value="F:GTP binding"/>
    <property type="evidence" value="ECO:0007669"/>
    <property type="project" value="UniProtKB-UniRule"/>
</dbReference>
<dbReference type="GO" id="GO:0003924">
    <property type="term" value="F:GTPase activity"/>
    <property type="evidence" value="ECO:0007669"/>
    <property type="project" value="UniProtKB-UniRule"/>
</dbReference>
<dbReference type="GO" id="GO:0046872">
    <property type="term" value="F:metal ion binding"/>
    <property type="evidence" value="ECO:0007669"/>
    <property type="project" value="UniProtKB-KW"/>
</dbReference>
<dbReference type="GO" id="GO:0030488">
    <property type="term" value="P:tRNA methylation"/>
    <property type="evidence" value="ECO:0007669"/>
    <property type="project" value="TreeGrafter"/>
</dbReference>
<dbReference type="GO" id="GO:0002098">
    <property type="term" value="P:tRNA wobble uridine modification"/>
    <property type="evidence" value="ECO:0007669"/>
    <property type="project" value="TreeGrafter"/>
</dbReference>
<dbReference type="CDD" id="cd04164">
    <property type="entry name" value="trmE"/>
    <property type="match status" value="1"/>
</dbReference>
<dbReference type="CDD" id="cd14858">
    <property type="entry name" value="TrmE_N"/>
    <property type="match status" value="1"/>
</dbReference>
<dbReference type="FunFam" id="3.30.1360.120:FF:000007">
    <property type="entry name" value="tRNA modification GTPase GTPBP3, mitochondrial"/>
    <property type="match status" value="1"/>
</dbReference>
<dbReference type="Gene3D" id="3.40.50.300">
    <property type="entry name" value="P-loop containing nucleotide triphosphate hydrolases"/>
    <property type="match status" value="1"/>
</dbReference>
<dbReference type="Gene3D" id="3.30.1360.120">
    <property type="entry name" value="Probable tRNA modification gtpase trme, domain 1"/>
    <property type="match status" value="1"/>
</dbReference>
<dbReference type="Gene3D" id="1.20.120.430">
    <property type="entry name" value="tRNA modification GTPase MnmE domain 2"/>
    <property type="match status" value="1"/>
</dbReference>
<dbReference type="HAMAP" id="MF_00379">
    <property type="entry name" value="GTPase_MnmE"/>
    <property type="match status" value="1"/>
</dbReference>
<dbReference type="InterPro" id="IPR031168">
    <property type="entry name" value="G_TrmE"/>
</dbReference>
<dbReference type="InterPro" id="IPR006073">
    <property type="entry name" value="GTP-bd"/>
</dbReference>
<dbReference type="InterPro" id="IPR018948">
    <property type="entry name" value="GTP-bd_TrmE_N"/>
</dbReference>
<dbReference type="InterPro" id="IPR004520">
    <property type="entry name" value="GTPase_MnmE"/>
</dbReference>
<dbReference type="InterPro" id="IPR027368">
    <property type="entry name" value="MnmE_dom2"/>
</dbReference>
<dbReference type="InterPro" id="IPR025867">
    <property type="entry name" value="MnmE_helical"/>
</dbReference>
<dbReference type="InterPro" id="IPR027417">
    <property type="entry name" value="P-loop_NTPase"/>
</dbReference>
<dbReference type="InterPro" id="IPR005225">
    <property type="entry name" value="Small_GTP-bd"/>
</dbReference>
<dbReference type="InterPro" id="IPR027266">
    <property type="entry name" value="TrmE/GcvT_dom1"/>
</dbReference>
<dbReference type="NCBIfam" id="TIGR00450">
    <property type="entry name" value="mnmE_trmE_thdF"/>
    <property type="match status" value="1"/>
</dbReference>
<dbReference type="NCBIfam" id="NF003661">
    <property type="entry name" value="PRK05291.1-3"/>
    <property type="match status" value="1"/>
</dbReference>
<dbReference type="NCBIfam" id="TIGR00231">
    <property type="entry name" value="small_GTP"/>
    <property type="match status" value="1"/>
</dbReference>
<dbReference type="PANTHER" id="PTHR42714">
    <property type="entry name" value="TRNA MODIFICATION GTPASE GTPBP3"/>
    <property type="match status" value="1"/>
</dbReference>
<dbReference type="PANTHER" id="PTHR42714:SF2">
    <property type="entry name" value="TRNA MODIFICATION GTPASE GTPBP3, MITOCHONDRIAL"/>
    <property type="match status" value="1"/>
</dbReference>
<dbReference type="Pfam" id="PF01926">
    <property type="entry name" value="MMR_HSR1"/>
    <property type="match status" value="1"/>
</dbReference>
<dbReference type="Pfam" id="PF12631">
    <property type="entry name" value="MnmE_helical"/>
    <property type="match status" value="1"/>
</dbReference>
<dbReference type="Pfam" id="PF10396">
    <property type="entry name" value="TrmE_N"/>
    <property type="match status" value="1"/>
</dbReference>
<dbReference type="PRINTS" id="PR00326">
    <property type="entry name" value="GTP1OBG"/>
</dbReference>
<dbReference type="SUPFAM" id="SSF52540">
    <property type="entry name" value="P-loop containing nucleoside triphosphate hydrolases"/>
    <property type="match status" value="1"/>
</dbReference>
<dbReference type="SUPFAM" id="SSF116878">
    <property type="entry name" value="TrmE connector domain"/>
    <property type="match status" value="1"/>
</dbReference>
<dbReference type="PROSITE" id="PS51709">
    <property type="entry name" value="G_TRME"/>
    <property type="match status" value="1"/>
</dbReference>
<reference key="1">
    <citation type="journal article" date="2011" name="Stand. Genomic Sci.">
        <title>Complete genome sequence of Parvibaculum lavamentivorans type strain (DS-1(T)).</title>
        <authorList>
            <person name="Schleheck D."/>
            <person name="Weiss M."/>
            <person name="Pitluck S."/>
            <person name="Bruce D."/>
            <person name="Land M.L."/>
            <person name="Han S."/>
            <person name="Saunders E."/>
            <person name="Tapia R."/>
            <person name="Detter C."/>
            <person name="Brettin T."/>
            <person name="Han J."/>
            <person name="Woyke T."/>
            <person name="Goodwin L."/>
            <person name="Pennacchio L."/>
            <person name="Nolan M."/>
            <person name="Cook A.M."/>
            <person name="Kjelleberg S."/>
            <person name="Thomas T."/>
        </authorList>
    </citation>
    <scope>NUCLEOTIDE SEQUENCE [LARGE SCALE GENOMIC DNA]</scope>
    <source>
        <strain>DS-1 / DSM 13023 / NCIMB 13966</strain>
    </source>
</reference>
<organism>
    <name type="scientific">Parvibaculum lavamentivorans (strain DS-1 / DSM 13023 / NCIMB 13966)</name>
    <dbReference type="NCBI Taxonomy" id="402881"/>
    <lineage>
        <taxon>Bacteria</taxon>
        <taxon>Pseudomonadati</taxon>
        <taxon>Pseudomonadota</taxon>
        <taxon>Alphaproteobacteria</taxon>
        <taxon>Hyphomicrobiales</taxon>
        <taxon>Parvibaculaceae</taxon>
        <taxon>Parvibaculum</taxon>
    </lineage>
</organism>
<evidence type="ECO:0000255" key="1">
    <source>
        <dbReference type="HAMAP-Rule" id="MF_00379"/>
    </source>
</evidence>
<protein>
    <recommendedName>
        <fullName evidence="1">tRNA modification GTPase MnmE</fullName>
        <ecNumber evidence="1">3.6.-.-</ecNumber>
    </recommendedName>
</protein>
<accession>A7HSK9</accession>
<proteinExistence type="inferred from homology"/>
<gene>
    <name evidence="1" type="primary">mnmE</name>
    <name evidence="1" type="synonym">trmE</name>
    <name type="ordered locus">Plav_1272</name>
</gene>
<name>MNME_PARL1</name>
<keyword id="KW-0963">Cytoplasm</keyword>
<keyword id="KW-0342">GTP-binding</keyword>
<keyword id="KW-0378">Hydrolase</keyword>
<keyword id="KW-0460">Magnesium</keyword>
<keyword id="KW-0479">Metal-binding</keyword>
<keyword id="KW-0547">Nucleotide-binding</keyword>
<keyword id="KW-0630">Potassium</keyword>
<keyword id="KW-1185">Reference proteome</keyword>
<keyword id="KW-0819">tRNA processing</keyword>
<sequence>METIYALSTAAGRAGIAVLRLSGPHARAALRALTGRKAGAPREAMLCRFRDPETHAALDRGLAIFFPAPASFTGEDVVELHIHGGRAVIAAMLRALGQLPGLRAAQPGEFTRRAFENGKLDLTEVEGLADLIDAETEAQRAQALRQMEGALGQLYEAWRARLMRALAYAEAEIDFPDEEVPGDLIAKLGPDIEALETEIAAHLDDGRRGEQLRDGVEVAIVGPPNAGKSSLLNRLAGREAAIVSDEAGTTRDVLEVRLDIGGVPVTLADTAGLREAAGAIEQEGVRRALARAEAADLRIVMVAPGVSGIGNGFALARPDDLRVLNKVDLGAEVPDGVIGISALTGQGIDALEAALAARVGSAYEAREHPVITRARHREGLADCAASLARAEAALKAGRDAELVAEDLRLAARALGRITGRVDVEDLLDVIFRDFCIGK</sequence>